<gene>
    <name evidence="1" type="primary">pth</name>
    <name type="ordered locus">Rsph17029_2483</name>
</gene>
<accession>A3PML9</accession>
<comment type="function">
    <text evidence="1">Hydrolyzes ribosome-free peptidyl-tRNAs (with 1 or more amino acids incorporated), which drop off the ribosome during protein synthesis, or as a result of ribosome stalling.</text>
</comment>
<comment type="function">
    <text evidence="1">Catalyzes the release of premature peptidyl moieties from peptidyl-tRNA molecules trapped in stalled 50S ribosomal subunits, and thus maintains levels of free tRNAs and 50S ribosomes.</text>
</comment>
<comment type="catalytic activity">
    <reaction evidence="1">
        <text>an N-acyl-L-alpha-aminoacyl-tRNA + H2O = an N-acyl-L-amino acid + a tRNA + H(+)</text>
        <dbReference type="Rhea" id="RHEA:54448"/>
        <dbReference type="Rhea" id="RHEA-COMP:10123"/>
        <dbReference type="Rhea" id="RHEA-COMP:13883"/>
        <dbReference type="ChEBI" id="CHEBI:15377"/>
        <dbReference type="ChEBI" id="CHEBI:15378"/>
        <dbReference type="ChEBI" id="CHEBI:59874"/>
        <dbReference type="ChEBI" id="CHEBI:78442"/>
        <dbReference type="ChEBI" id="CHEBI:138191"/>
        <dbReference type="EC" id="3.1.1.29"/>
    </reaction>
</comment>
<comment type="subunit">
    <text evidence="1">Monomer.</text>
</comment>
<comment type="subcellular location">
    <subcellularLocation>
        <location evidence="1">Cytoplasm</location>
    </subcellularLocation>
</comment>
<comment type="similarity">
    <text evidence="1">Belongs to the PTH family.</text>
</comment>
<dbReference type="EC" id="3.1.1.29" evidence="1"/>
<dbReference type="EMBL" id="CP000577">
    <property type="protein sequence ID" value="ABN77585.1"/>
    <property type="molecule type" value="Genomic_DNA"/>
</dbReference>
<dbReference type="RefSeq" id="WP_011841700.1">
    <property type="nucleotide sequence ID" value="NC_009049.1"/>
</dbReference>
<dbReference type="SMR" id="A3PML9"/>
<dbReference type="KEGG" id="rsh:Rsph17029_2483"/>
<dbReference type="HOGENOM" id="CLU_062456_1_0_5"/>
<dbReference type="GO" id="GO:0005737">
    <property type="term" value="C:cytoplasm"/>
    <property type="evidence" value="ECO:0007669"/>
    <property type="project" value="UniProtKB-SubCell"/>
</dbReference>
<dbReference type="GO" id="GO:0004045">
    <property type="term" value="F:peptidyl-tRNA hydrolase activity"/>
    <property type="evidence" value="ECO:0007669"/>
    <property type="project" value="UniProtKB-UniRule"/>
</dbReference>
<dbReference type="GO" id="GO:0000049">
    <property type="term" value="F:tRNA binding"/>
    <property type="evidence" value="ECO:0007669"/>
    <property type="project" value="UniProtKB-UniRule"/>
</dbReference>
<dbReference type="GO" id="GO:0006515">
    <property type="term" value="P:protein quality control for misfolded or incompletely synthesized proteins"/>
    <property type="evidence" value="ECO:0007669"/>
    <property type="project" value="UniProtKB-UniRule"/>
</dbReference>
<dbReference type="GO" id="GO:0072344">
    <property type="term" value="P:rescue of stalled ribosome"/>
    <property type="evidence" value="ECO:0007669"/>
    <property type="project" value="UniProtKB-UniRule"/>
</dbReference>
<dbReference type="CDD" id="cd00462">
    <property type="entry name" value="PTH"/>
    <property type="match status" value="1"/>
</dbReference>
<dbReference type="FunFam" id="3.40.50.1470:FF:000001">
    <property type="entry name" value="Peptidyl-tRNA hydrolase"/>
    <property type="match status" value="1"/>
</dbReference>
<dbReference type="Gene3D" id="3.40.50.1470">
    <property type="entry name" value="Peptidyl-tRNA hydrolase"/>
    <property type="match status" value="1"/>
</dbReference>
<dbReference type="HAMAP" id="MF_00083">
    <property type="entry name" value="Pept_tRNA_hydro_bact"/>
    <property type="match status" value="1"/>
</dbReference>
<dbReference type="InterPro" id="IPR001328">
    <property type="entry name" value="Pept_tRNA_hydro"/>
</dbReference>
<dbReference type="InterPro" id="IPR018171">
    <property type="entry name" value="Pept_tRNA_hydro_CS"/>
</dbReference>
<dbReference type="InterPro" id="IPR036416">
    <property type="entry name" value="Pept_tRNA_hydro_sf"/>
</dbReference>
<dbReference type="NCBIfam" id="TIGR00447">
    <property type="entry name" value="pth"/>
    <property type="match status" value="1"/>
</dbReference>
<dbReference type="PANTHER" id="PTHR17224">
    <property type="entry name" value="PEPTIDYL-TRNA HYDROLASE"/>
    <property type="match status" value="1"/>
</dbReference>
<dbReference type="PANTHER" id="PTHR17224:SF1">
    <property type="entry name" value="PEPTIDYL-TRNA HYDROLASE"/>
    <property type="match status" value="1"/>
</dbReference>
<dbReference type="Pfam" id="PF01195">
    <property type="entry name" value="Pept_tRNA_hydro"/>
    <property type="match status" value="1"/>
</dbReference>
<dbReference type="SUPFAM" id="SSF53178">
    <property type="entry name" value="Peptidyl-tRNA hydrolase-like"/>
    <property type="match status" value="1"/>
</dbReference>
<dbReference type="PROSITE" id="PS01195">
    <property type="entry name" value="PEPT_TRNA_HYDROL_1"/>
    <property type="match status" value="1"/>
</dbReference>
<dbReference type="PROSITE" id="PS01196">
    <property type="entry name" value="PEPT_TRNA_HYDROL_2"/>
    <property type="match status" value="1"/>
</dbReference>
<reference key="1">
    <citation type="submission" date="2007-02" db="EMBL/GenBank/DDBJ databases">
        <title>Complete sequence of chromosome 1 of Rhodobacter sphaeroides ATCC 17029.</title>
        <authorList>
            <person name="Copeland A."/>
            <person name="Lucas S."/>
            <person name="Lapidus A."/>
            <person name="Barry K."/>
            <person name="Detter J.C."/>
            <person name="Glavina del Rio T."/>
            <person name="Hammon N."/>
            <person name="Israni S."/>
            <person name="Dalin E."/>
            <person name="Tice H."/>
            <person name="Pitluck S."/>
            <person name="Kiss H."/>
            <person name="Brettin T."/>
            <person name="Bruce D."/>
            <person name="Han C."/>
            <person name="Tapia R."/>
            <person name="Gilna P."/>
            <person name="Schmutz J."/>
            <person name="Larimer F."/>
            <person name="Land M."/>
            <person name="Hauser L."/>
            <person name="Kyrpides N."/>
            <person name="Mikhailova N."/>
            <person name="Richardson P."/>
            <person name="Mackenzie C."/>
            <person name="Choudhary M."/>
            <person name="Donohue T.J."/>
            <person name="Kaplan S."/>
        </authorList>
    </citation>
    <scope>NUCLEOTIDE SEQUENCE [LARGE SCALE GENOMIC DNA]</scope>
    <source>
        <strain>ATCC 17029 / ATH 2.4.9</strain>
    </source>
</reference>
<keyword id="KW-0963">Cytoplasm</keyword>
<keyword id="KW-0378">Hydrolase</keyword>
<keyword id="KW-0694">RNA-binding</keyword>
<keyword id="KW-0820">tRNA-binding</keyword>
<protein>
    <recommendedName>
        <fullName evidence="1">Peptidyl-tRNA hydrolase</fullName>
        <shortName evidence="1">Pth</shortName>
        <ecNumber evidence="1">3.1.1.29</ecNumber>
    </recommendedName>
</protein>
<name>PTH_CERS1</name>
<sequence length="225" mass="24169">MKLFVGLGNPGARYAGNRHNIGYMAVEAIAADHGFGPWRARFQGLTSEGRLGSEQVLLLKPETFMNLSGQSVGEAMRFYKLTPADVIVFHDELDLAPGKLRLKQGGGHAGHNGLRSIHAHVGEAYGRVRLGIGHPGHKDAVAPYVLSDFAKADQDWLADLLRGIADGAEALARGDGAKFQNAVALRMQPPKPEKPKPAAKAPEAQAPEAAPDERSALQKLADRFR</sequence>
<feature type="chain" id="PRO_1000010638" description="Peptidyl-tRNA hydrolase">
    <location>
        <begin position="1"/>
        <end position="225"/>
    </location>
</feature>
<feature type="region of interest" description="Disordered" evidence="2">
    <location>
        <begin position="182"/>
        <end position="225"/>
    </location>
</feature>
<feature type="compositionally biased region" description="Low complexity" evidence="2">
    <location>
        <begin position="198"/>
        <end position="209"/>
    </location>
</feature>
<feature type="compositionally biased region" description="Basic and acidic residues" evidence="2">
    <location>
        <begin position="211"/>
        <end position="225"/>
    </location>
</feature>
<feature type="active site" description="Proton acceptor" evidence="1">
    <location>
        <position position="19"/>
    </location>
</feature>
<feature type="binding site" evidence="1">
    <location>
        <position position="14"/>
    </location>
    <ligand>
        <name>tRNA</name>
        <dbReference type="ChEBI" id="CHEBI:17843"/>
    </ligand>
</feature>
<feature type="binding site" evidence="1">
    <location>
        <position position="64"/>
    </location>
    <ligand>
        <name>tRNA</name>
        <dbReference type="ChEBI" id="CHEBI:17843"/>
    </ligand>
</feature>
<feature type="binding site" evidence="1">
    <location>
        <position position="66"/>
    </location>
    <ligand>
        <name>tRNA</name>
        <dbReference type="ChEBI" id="CHEBI:17843"/>
    </ligand>
</feature>
<feature type="binding site" evidence="1">
    <location>
        <position position="112"/>
    </location>
    <ligand>
        <name>tRNA</name>
        <dbReference type="ChEBI" id="CHEBI:17843"/>
    </ligand>
</feature>
<feature type="site" description="Discriminates between blocked and unblocked aminoacyl-tRNA" evidence="1">
    <location>
        <position position="9"/>
    </location>
</feature>
<feature type="site" description="Stabilizes the basic form of H active site to accept a proton" evidence="1">
    <location>
        <position position="91"/>
    </location>
</feature>
<evidence type="ECO:0000255" key="1">
    <source>
        <dbReference type="HAMAP-Rule" id="MF_00083"/>
    </source>
</evidence>
<evidence type="ECO:0000256" key="2">
    <source>
        <dbReference type="SAM" id="MobiDB-lite"/>
    </source>
</evidence>
<organism>
    <name type="scientific">Cereibacter sphaeroides (strain ATCC 17029 / ATH 2.4.9)</name>
    <name type="common">Rhodobacter sphaeroides</name>
    <dbReference type="NCBI Taxonomy" id="349101"/>
    <lineage>
        <taxon>Bacteria</taxon>
        <taxon>Pseudomonadati</taxon>
        <taxon>Pseudomonadota</taxon>
        <taxon>Alphaproteobacteria</taxon>
        <taxon>Rhodobacterales</taxon>
        <taxon>Paracoccaceae</taxon>
        <taxon>Cereibacter</taxon>
    </lineage>
</organism>
<proteinExistence type="inferred from homology"/>